<sequence length="190" mass="20727">MTEIVKVREQLQISLSDFQEQASLQSGQIFVVGCSTSEVLGERIGTSGTMEVAEAIFSELKQFQDQTGIELAFQCCEHLNRALVVERELAMKYQFEIVTVTPVRSAGGALATYAYHNLKDPVVIEFIKADAGMDIGDTFIGMHLKHVAVPVRTSVKEIGSAHVTMATTRGKLIGGARAVYAAKEETITCR</sequence>
<reference key="1">
    <citation type="journal article" date="2006" name="J. Bacteriol.">
        <title>Pathogenomic sequence analysis of Bacillus cereus and Bacillus thuringiensis isolates closely related to Bacillus anthracis.</title>
        <authorList>
            <person name="Han C.S."/>
            <person name="Xie G."/>
            <person name="Challacombe J.F."/>
            <person name="Altherr M.R."/>
            <person name="Bhotika S.S."/>
            <person name="Bruce D."/>
            <person name="Campbell C.S."/>
            <person name="Campbell M.L."/>
            <person name="Chen J."/>
            <person name="Chertkov O."/>
            <person name="Cleland C."/>
            <person name="Dimitrijevic M."/>
            <person name="Doggett N.A."/>
            <person name="Fawcett J.J."/>
            <person name="Glavina T."/>
            <person name="Goodwin L.A."/>
            <person name="Hill K.K."/>
            <person name="Hitchcock P."/>
            <person name="Jackson P.J."/>
            <person name="Keim P."/>
            <person name="Kewalramani A.R."/>
            <person name="Longmire J."/>
            <person name="Lucas S."/>
            <person name="Malfatti S."/>
            <person name="McMurry K."/>
            <person name="Meincke L.J."/>
            <person name="Misra M."/>
            <person name="Moseman B.L."/>
            <person name="Mundt M."/>
            <person name="Munk A.C."/>
            <person name="Okinaka R.T."/>
            <person name="Parson-Quintana B."/>
            <person name="Reilly L.P."/>
            <person name="Richardson P."/>
            <person name="Robinson D.L."/>
            <person name="Rubin E."/>
            <person name="Saunders E."/>
            <person name="Tapia R."/>
            <person name="Tesmer J.G."/>
            <person name="Thayer N."/>
            <person name="Thompson L.S."/>
            <person name="Tice H."/>
            <person name="Ticknor L.O."/>
            <person name="Wills P.L."/>
            <person name="Brettin T.S."/>
            <person name="Gilna P."/>
        </authorList>
    </citation>
    <scope>NUCLEOTIDE SEQUENCE [LARGE SCALE GENOMIC DNA]</scope>
    <source>
        <strain>ZK / E33L</strain>
    </source>
</reference>
<evidence type="ECO:0000255" key="1">
    <source>
        <dbReference type="HAMAP-Rule" id="MF_00800"/>
    </source>
</evidence>
<proteinExistence type="inferred from homology"/>
<accession>Q630T2</accession>
<comment type="similarity">
    <text evidence="1">Belongs to the UPF0340 family.</text>
</comment>
<organism>
    <name type="scientific">Bacillus cereus (strain ZK / E33L)</name>
    <dbReference type="NCBI Taxonomy" id="288681"/>
    <lineage>
        <taxon>Bacteria</taxon>
        <taxon>Bacillati</taxon>
        <taxon>Bacillota</taxon>
        <taxon>Bacilli</taxon>
        <taxon>Bacillales</taxon>
        <taxon>Bacillaceae</taxon>
        <taxon>Bacillus</taxon>
        <taxon>Bacillus cereus group</taxon>
    </lineage>
</organism>
<name>Y5016_BACCZ</name>
<feature type="chain" id="PRO_0000213002" description="UPF0340 protein BCE33L5016">
    <location>
        <begin position="1"/>
        <end position="190"/>
    </location>
</feature>
<gene>
    <name type="ordered locus">BCE33L5016</name>
</gene>
<dbReference type="EMBL" id="CP000001">
    <property type="protein sequence ID" value="AAU15263.1"/>
    <property type="molecule type" value="Genomic_DNA"/>
</dbReference>
<dbReference type="RefSeq" id="WP_000136359.1">
    <property type="nucleotide sequence ID" value="NZ_CP009968.1"/>
</dbReference>
<dbReference type="SMR" id="Q630T2"/>
<dbReference type="KEGG" id="bcz:BCE33L5016"/>
<dbReference type="PATRIC" id="fig|288681.22.peg.329"/>
<dbReference type="Proteomes" id="UP000002612">
    <property type="component" value="Chromosome"/>
</dbReference>
<dbReference type="Gene3D" id="3.40.50.10360">
    <property type="entry name" value="Hypothetical protein TT1679"/>
    <property type="match status" value="1"/>
</dbReference>
<dbReference type="HAMAP" id="MF_00800">
    <property type="entry name" value="UPF0340"/>
    <property type="match status" value="1"/>
</dbReference>
<dbReference type="InterPro" id="IPR028345">
    <property type="entry name" value="Antibiotic_NAT-like"/>
</dbReference>
<dbReference type="InterPro" id="IPR006340">
    <property type="entry name" value="DUF436"/>
</dbReference>
<dbReference type="NCBIfam" id="TIGR01440">
    <property type="entry name" value="TIGR01440 family protein"/>
    <property type="match status" value="1"/>
</dbReference>
<dbReference type="Pfam" id="PF04260">
    <property type="entry name" value="DUF436"/>
    <property type="match status" value="1"/>
</dbReference>
<dbReference type="PIRSF" id="PIRSF007510">
    <property type="entry name" value="UCP007510"/>
    <property type="match status" value="1"/>
</dbReference>
<dbReference type="SUPFAM" id="SSF110710">
    <property type="entry name" value="TTHA0583/YokD-like"/>
    <property type="match status" value="1"/>
</dbReference>
<protein>
    <recommendedName>
        <fullName evidence="1">UPF0340 protein BCE33L5016</fullName>
    </recommendedName>
</protein>